<organism>
    <name type="scientific">Serratia sp. (strain ATCC 39006)</name>
    <name type="common">Prodigiosinella confusarubida</name>
    <dbReference type="NCBI Taxonomy" id="104623"/>
    <lineage>
        <taxon>Bacteria</taxon>
        <taxon>Pseudomonadati</taxon>
        <taxon>Pseudomonadota</taxon>
        <taxon>Gammaproteobacteria</taxon>
        <taxon>Enterobacterales</taxon>
        <taxon>Pectobacteriaceae</taxon>
        <taxon>Prodigiosinella</taxon>
    </lineage>
</organism>
<protein>
    <recommendedName>
        <fullName evidence="3">Probable NAD(P)H nitroreductase PigM</fullName>
        <ecNumber evidence="5">1.-.-.-</ecNumber>
    </recommendedName>
</protein>
<gene>
    <name evidence="2" type="primary">pigM</name>
</gene>
<accession>Q5W259</accession>
<sequence length="359" mass="40860">MVNDTFEQALQNAINIARLAPSSHNCQPWSVHYDAATRCGEVSIDRQRALKGLPSLEREMLMSCGIFFEYLSTLLKHSGYPLDWQWVGARQNGSSGMLISFAPSAPCVADLVAYQQWVQRISDRHTVRTAYQPTQVNEQQQAQLYALFDRSPVTCDIKYGEATRHDVAFLTANYASLDFADQQAWRETYHYIRFNEQQAAEDGFYLHHLFGPVSCGFRWFFRIAFHPRLSWLAKRLRLPASMAKGLAELVVEGPQYLALSLEHESDENLFIAGMKLGQLWLMLQSWGWSLHPLSVLVQHATARCALADTVRLTGLPVFFARFGQHRQSGIPTPRRAWQRILTTTQHSFSPENGADVKQP</sequence>
<keyword id="KW-0285">Flavoprotein</keyword>
<keyword id="KW-0288">FMN</keyword>
<keyword id="KW-0520">NAD</keyword>
<keyword id="KW-0521">NADP</keyword>
<keyword id="KW-0560">Oxidoreductase</keyword>
<dbReference type="EC" id="1.-.-.-" evidence="5"/>
<dbReference type="EMBL" id="AJ833001">
    <property type="protein sequence ID" value="CAH55641.1"/>
    <property type="molecule type" value="Genomic_DNA"/>
</dbReference>
<dbReference type="RefSeq" id="WP_021014651.1">
    <property type="nucleotide sequence ID" value="NZ_CP025084.1"/>
</dbReference>
<dbReference type="SMR" id="Q5W259"/>
<dbReference type="STRING" id="104623.Ser39006_01381"/>
<dbReference type="KEGG" id="ag:CAH55641"/>
<dbReference type="eggNOG" id="COG0778">
    <property type="taxonomic scope" value="Bacteria"/>
</dbReference>
<dbReference type="UniPathway" id="UPA01072"/>
<dbReference type="GO" id="GO:0016491">
    <property type="term" value="F:oxidoreductase activity"/>
    <property type="evidence" value="ECO:0007669"/>
    <property type="project" value="UniProtKB-KW"/>
</dbReference>
<dbReference type="GO" id="GO:0017000">
    <property type="term" value="P:antibiotic biosynthetic process"/>
    <property type="evidence" value="ECO:0000315"/>
    <property type="project" value="UniProtKB"/>
</dbReference>
<dbReference type="Gene3D" id="3.40.109.10">
    <property type="entry name" value="NADH Oxidase"/>
    <property type="match status" value="1"/>
</dbReference>
<dbReference type="InterPro" id="IPR000415">
    <property type="entry name" value="Nitroreductase-like"/>
</dbReference>
<dbReference type="SUPFAM" id="SSF55469">
    <property type="entry name" value="FMN-dependent nitroreductase-like"/>
    <property type="match status" value="1"/>
</dbReference>
<name>PIGM_SERS3</name>
<reference key="1">
    <citation type="journal article" date="2004" name="Microbiology">
        <title>The Serratia gene cluster encoding biosynthesis of the red antibiotic, prodigiosin, shows species- and strain-dependent genome context variation.</title>
        <authorList>
            <person name="Harris A.K."/>
            <person name="Williamson N.R."/>
            <person name="Slater H."/>
            <person name="Cox A."/>
            <person name="Abbasi S."/>
            <person name="Foulds I."/>
            <person name="Simonsen H.T."/>
            <person name="Leeper F.J."/>
            <person name="Salmond G.P."/>
        </authorList>
    </citation>
    <scope>NUCLEOTIDE SEQUENCE [GENOMIC DNA]</scope>
    <source>
        <strain>ATCC 39006 / SC 11482</strain>
    </source>
</reference>
<reference key="2">
    <citation type="journal article" date="2005" name="Mol. Microbiol.">
        <title>Biosynthesis of the red antibiotic, prodigiosin, in Serratia: identification of a novel 2-methyl-3-n-amyl-pyrrole (MAP) assembly pathway, definition of the terminal condensing enzyme, and implications for undecylprodigiosin biosynthesis in Streptomyces.</title>
        <authorList>
            <person name="Williamson N.R."/>
            <person name="Simonsen H.T."/>
            <person name="Ahmed R.A."/>
            <person name="Goldet G."/>
            <person name="Slater H."/>
            <person name="Woodley L."/>
            <person name="Leeper F.J."/>
            <person name="Salmond G.P."/>
        </authorList>
    </citation>
    <scope>FUNCTION</scope>
    <scope>CATALYTIC ACTIVITY</scope>
    <scope>DISRUPTION PHENOTYPE</scope>
    <scope>COFACTOR</scope>
    <scope>PATHWAY</scope>
    <source>
        <strain>ATCC 39006 / SC 11482</strain>
    </source>
</reference>
<evidence type="ECO:0000269" key="1">
    <source>
    </source>
</evidence>
<evidence type="ECO:0000303" key="2">
    <source>
    </source>
</evidence>
<evidence type="ECO:0000303" key="3">
    <source>
    </source>
</evidence>
<evidence type="ECO:0000305" key="4"/>
<evidence type="ECO:0000305" key="5">
    <source>
    </source>
</evidence>
<comment type="function">
    <text evidence="1">Involved in the biosynthesis of 4-methoxy-2,2'-bipyrrole-5-carbaldehyde (MBC), one of the terminal products involved in the biosynthesis of the red antibiotic prodigiosin (Pig). Catalyzes the oxidation of the hydroxy group of 4-hydroxy-2,2'-bipyrrole-5-methanol (HBM) to yield 4-methoxy-2,2'-bipyrrole-5-carbaldehyde (MBC).</text>
</comment>
<comment type="cofactor">
    <cofactor evidence="5">
        <name>FMN</name>
        <dbReference type="ChEBI" id="CHEBI:58210"/>
    </cofactor>
</comment>
<comment type="pathway">
    <text evidence="5">Antibiotic biosynthesis; prodigiosin biosynthesis.</text>
</comment>
<comment type="disruption phenotype">
    <text evidence="1">Cells lacking this gene show a white phenotype, and produce 2-methyl-3-n-amyl-pyrrole (MAP) and 4-hydroxy-2,2'-bipyrrole-5-methanol (HBM).</text>
</comment>
<comment type="similarity">
    <text evidence="4">Belongs to the nitroreductase family.</text>
</comment>
<proteinExistence type="evidence at protein level"/>
<feature type="chain" id="PRO_0000436248" description="Probable NAD(P)H nitroreductase PigM">
    <location>
        <begin position="1"/>
        <end position="359"/>
    </location>
</feature>